<name>DGOD_ECO7I</name>
<reference key="1">
    <citation type="journal article" date="2009" name="PLoS Genet.">
        <title>Organised genome dynamics in the Escherichia coli species results in highly diverse adaptive paths.</title>
        <authorList>
            <person name="Touchon M."/>
            <person name="Hoede C."/>
            <person name="Tenaillon O."/>
            <person name="Barbe V."/>
            <person name="Baeriswyl S."/>
            <person name="Bidet P."/>
            <person name="Bingen E."/>
            <person name="Bonacorsi S."/>
            <person name="Bouchier C."/>
            <person name="Bouvet O."/>
            <person name="Calteau A."/>
            <person name="Chiapello H."/>
            <person name="Clermont O."/>
            <person name="Cruveiller S."/>
            <person name="Danchin A."/>
            <person name="Diard M."/>
            <person name="Dossat C."/>
            <person name="Karoui M.E."/>
            <person name="Frapy E."/>
            <person name="Garry L."/>
            <person name="Ghigo J.M."/>
            <person name="Gilles A.M."/>
            <person name="Johnson J."/>
            <person name="Le Bouguenec C."/>
            <person name="Lescat M."/>
            <person name="Mangenot S."/>
            <person name="Martinez-Jehanne V."/>
            <person name="Matic I."/>
            <person name="Nassif X."/>
            <person name="Oztas S."/>
            <person name="Petit M.A."/>
            <person name="Pichon C."/>
            <person name="Rouy Z."/>
            <person name="Ruf C.S."/>
            <person name="Schneider D."/>
            <person name="Tourret J."/>
            <person name="Vacherie B."/>
            <person name="Vallenet D."/>
            <person name="Medigue C."/>
            <person name="Rocha E.P.C."/>
            <person name="Denamur E."/>
        </authorList>
    </citation>
    <scope>NUCLEOTIDE SEQUENCE [LARGE SCALE GENOMIC DNA]</scope>
    <source>
        <strain>IAI39 / ExPEC</strain>
    </source>
</reference>
<organism>
    <name type="scientific">Escherichia coli O7:K1 (strain IAI39 / ExPEC)</name>
    <dbReference type="NCBI Taxonomy" id="585057"/>
    <lineage>
        <taxon>Bacteria</taxon>
        <taxon>Pseudomonadati</taxon>
        <taxon>Pseudomonadota</taxon>
        <taxon>Gammaproteobacteria</taxon>
        <taxon>Enterobacterales</taxon>
        <taxon>Enterobacteriaceae</taxon>
        <taxon>Escherichia</taxon>
    </lineage>
</organism>
<gene>
    <name evidence="2" type="primary">dgoD</name>
    <name type="ordered locus">ECIAI39_4294</name>
</gene>
<evidence type="ECO:0000250" key="1"/>
<evidence type="ECO:0000255" key="2">
    <source>
        <dbReference type="HAMAP-Rule" id="MF_01289"/>
    </source>
</evidence>
<feature type="chain" id="PRO_1000140379" description="D-galactonate dehydratase">
    <location>
        <begin position="1"/>
        <end position="382"/>
    </location>
</feature>
<feature type="active site" description="Proton donor" evidence="1">
    <location>
        <position position="185"/>
    </location>
</feature>
<feature type="active site" description="Proton acceptor" evidence="1">
    <location>
        <position position="285"/>
    </location>
</feature>
<feature type="binding site" evidence="2">
    <location>
        <position position="183"/>
    </location>
    <ligand>
        <name>Mg(2+)</name>
        <dbReference type="ChEBI" id="CHEBI:18420"/>
    </ligand>
</feature>
<feature type="binding site" evidence="2">
    <location>
        <position position="209"/>
    </location>
    <ligand>
        <name>Mg(2+)</name>
        <dbReference type="ChEBI" id="CHEBI:18420"/>
    </ligand>
</feature>
<feature type="binding site" evidence="2">
    <location>
        <position position="235"/>
    </location>
    <ligand>
        <name>Mg(2+)</name>
        <dbReference type="ChEBI" id="CHEBI:18420"/>
    </ligand>
</feature>
<feature type="site" description="Increases basicity of active site His" evidence="2">
    <location>
        <position position="258"/>
    </location>
</feature>
<feature type="site" description="Transition state stabilizer" evidence="2">
    <location>
        <position position="310"/>
    </location>
</feature>
<proteinExistence type="inferred from homology"/>
<comment type="function">
    <text evidence="2">Catalyzes the dehydration of D-galactonate to 2-keto-3-deoxy-D-galactonate.</text>
</comment>
<comment type="catalytic activity">
    <reaction evidence="2">
        <text>D-galactonate = 2-dehydro-3-deoxy-D-galactonate + H2O</text>
        <dbReference type="Rhea" id="RHEA:18649"/>
        <dbReference type="ChEBI" id="CHEBI:12931"/>
        <dbReference type="ChEBI" id="CHEBI:15377"/>
        <dbReference type="ChEBI" id="CHEBI:57989"/>
        <dbReference type="EC" id="4.2.1.6"/>
    </reaction>
</comment>
<comment type="cofactor">
    <cofactor evidence="2">
        <name>Mg(2+)</name>
        <dbReference type="ChEBI" id="CHEBI:18420"/>
    </cofactor>
    <text evidence="2">Binds 1 Mg(2+) ion per subunit.</text>
</comment>
<comment type="pathway">
    <text evidence="2">Carbohydrate acid metabolism; D-galactonate degradation; D-glyceraldehyde 3-phosphate and pyruvate from D-galactonate: step 1/3.</text>
</comment>
<comment type="miscellaneous">
    <text evidence="2">Reaction proceeds via an anti dehydration.</text>
</comment>
<comment type="similarity">
    <text evidence="2">Belongs to the mandelate racemase/muconate lactonizing enzyme family. GalD subfamily.</text>
</comment>
<accession>B7NQZ2</accession>
<dbReference type="EC" id="4.2.1.6" evidence="2"/>
<dbReference type="EMBL" id="CU928164">
    <property type="protein sequence ID" value="CAR20400.1"/>
    <property type="molecule type" value="Genomic_DNA"/>
</dbReference>
<dbReference type="RefSeq" id="WP_000705012.1">
    <property type="nucleotide sequence ID" value="NC_011750.1"/>
</dbReference>
<dbReference type="RefSeq" id="YP_002410168.1">
    <property type="nucleotide sequence ID" value="NC_011750.1"/>
</dbReference>
<dbReference type="SMR" id="B7NQZ2"/>
<dbReference type="STRING" id="585057.ECIAI39_4294"/>
<dbReference type="GeneID" id="89518589"/>
<dbReference type="KEGG" id="ect:ECIAI39_4294"/>
<dbReference type="PATRIC" id="fig|585057.6.peg.4440"/>
<dbReference type="HOGENOM" id="CLU_030273_3_2_6"/>
<dbReference type="UniPathway" id="UPA00081">
    <property type="reaction ID" value="UER00518"/>
</dbReference>
<dbReference type="Proteomes" id="UP000000749">
    <property type="component" value="Chromosome"/>
</dbReference>
<dbReference type="GO" id="GO:0008869">
    <property type="term" value="F:galactonate dehydratase activity"/>
    <property type="evidence" value="ECO:0007669"/>
    <property type="project" value="UniProtKB-UniRule"/>
</dbReference>
<dbReference type="GO" id="GO:0000287">
    <property type="term" value="F:magnesium ion binding"/>
    <property type="evidence" value="ECO:0007669"/>
    <property type="project" value="UniProtKB-UniRule"/>
</dbReference>
<dbReference type="GO" id="GO:0009063">
    <property type="term" value="P:amino acid catabolic process"/>
    <property type="evidence" value="ECO:0007669"/>
    <property type="project" value="InterPro"/>
</dbReference>
<dbReference type="GO" id="GO:0034194">
    <property type="term" value="P:D-galactonate catabolic process"/>
    <property type="evidence" value="ECO:0007669"/>
    <property type="project" value="UniProtKB-UniRule"/>
</dbReference>
<dbReference type="CDD" id="cd03325">
    <property type="entry name" value="D-galactonate_dehydratase"/>
    <property type="match status" value="1"/>
</dbReference>
<dbReference type="FunFam" id="3.20.20.120:FF:000008">
    <property type="entry name" value="D-galactonate dehydratase"/>
    <property type="match status" value="1"/>
</dbReference>
<dbReference type="FunFam" id="3.30.390.10:FF:000003">
    <property type="entry name" value="D-galactonate dehydratase"/>
    <property type="match status" value="1"/>
</dbReference>
<dbReference type="Gene3D" id="3.20.20.120">
    <property type="entry name" value="Enolase-like C-terminal domain"/>
    <property type="match status" value="1"/>
</dbReference>
<dbReference type="Gene3D" id="3.30.390.10">
    <property type="entry name" value="Enolase-like, N-terminal domain"/>
    <property type="match status" value="1"/>
</dbReference>
<dbReference type="HAMAP" id="MF_01289">
    <property type="entry name" value="Galacton_dehydrat"/>
    <property type="match status" value="1"/>
</dbReference>
<dbReference type="InterPro" id="IPR034593">
    <property type="entry name" value="DgoD-like"/>
</dbReference>
<dbReference type="InterPro" id="IPR036849">
    <property type="entry name" value="Enolase-like_C_sf"/>
</dbReference>
<dbReference type="InterPro" id="IPR029017">
    <property type="entry name" value="Enolase-like_N"/>
</dbReference>
<dbReference type="InterPro" id="IPR029065">
    <property type="entry name" value="Enolase_C-like"/>
</dbReference>
<dbReference type="InterPro" id="IPR023592">
    <property type="entry name" value="Galactonate_deHydtase"/>
</dbReference>
<dbReference type="InterPro" id="IPR018110">
    <property type="entry name" value="Mandel_Rmase/mucon_lact_enz_CS"/>
</dbReference>
<dbReference type="InterPro" id="IPR013342">
    <property type="entry name" value="Mandelate_racemase_C"/>
</dbReference>
<dbReference type="InterPro" id="IPR013341">
    <property type="entry name" value="Mandelate_racemase_N_dom"/>
</dbReference>
<dbReference type="NCBIfam" id="NF010624">
    <property type="entry name" value="PRK14017.1"/>
    <property type="match status" value="1"/>
</dbReference>
<dbReference type="PANTHER" id="PTHR48080:SF2">
    <property type="entry name" value="D-GALACTONATE DEHYDRATASE"/>
    <property type="match status" value="1"/>
</dbReference>
<dbReference type="PANTHER" id="PTHR48080">
    <property type="entry name" value="D-GALACTONATE DEHYDRATASE-RELATED"/>
    <property type="match status" value="1"/>
</dbReference>
<dbReference type="Pfam" id="PF13378">
    <property type="entry name" value="MR_MLE_C"/>
    <property type="match status" value="1"/>
</dbReference>
<dbReference type="Pfam" id="PF02746">
    <property type="entry name" value="MR_MLE_N"/>
    <property type="match status" value="1"/>
</dbReference>
<dbReference type="SFLD" id="SFLDF00003">
    <property type="entry name" value="D-galactonate_dehydratase"/>
    <property type="match status" value="1"/>
</dbReference>
<dbReference type="SFLD" id="SFLDG00179">
    <property type="entry name" value="mandelate_racemase"/>
    <property type="match status" value="1"/>
</dbReference>
<dbReference type="SMART" id="SM00922">
    <property type="entry name" value="MR_MLE"/>
    <property type="match status" value="1"/>
</dbReference>
<dbReference type="SUPFAM" id="SSF51604">
    <property type="entry name" value="Enolase C-terminal domain-like"/>
    <property type="match status" value="1"/>
</dbReference>
<dbReference type="SUPFAM" id="SSF54826">
    <property type="entry name" value="Enolase N-terminal domain-like"/>
    <property type="match status" value="1"/>
</dbReference>
<dbReference type="PROSITE" id="PS00908">
    <property type="entry name" value="MR_MLE_1"/>
    <property type="match status" value="1"/>
</dbReference>
<dbReference type="PROSITE" id="PS00909">
    <property type="entry name" value="MR_MLE_2"/>
    <property type="match status" value="1"/>
</dbReference>
<keyword id="KW-0456">Lyase</keyword>
<keyword id="KW-0460">Magnesium</keyword>
<keyword id="KW-0479">Metal-binding</keyword>
<protein>
    <recommendedName>
        <fullName evidence="2">D-galactonate dehydratase</fullName>
        <shortName evidence="2">GalD</shortName>
        <ecNumber evidence="2">4.2.1.6</ecNumber>
    </recommendedName>
</protein>
<sequence length="382" mass="42553">MKITKITTYRLPPRWMFLKIETDEGVVGWGEPVIEGRARTVEAAVHELSDYLIGQDPSRINDLWQVMYRAGFYRGGPILMSAIAGIDQALWDIKGKVLNAPVWQLMGGLVRDKIKAYSWVGGDRPADVIDGIKTLREIGFDTFKLNGCEELGLIDNSRAVDAAVNTVAQIREAFGNQIEFGLDFHGRVSAPMAKVLIKELEPYRPLFIEEPVLAEQAEYYPKLAAQTHIPLAAGERMFSRFDFKRVLEAGGISILQPDLSHAGGITECYKIAGMAEAYDVTLAPHCPLGPIALAACLHIDFVSYNAVLQEQSMGIHYNKGAELLDFVKNKEDFSMVGGFFKPLTKPGLGVEIDEAKVIEFSKNAPDWRNPLWRHEDNSVAEW</sequence>